<gene>
    <name evidence="1" type="primary">chlB</name>
</gene>
<reference key="1">
    <citation type="journal article" date="2005" name="BMC Biol.">
        <title>The complete chloroplast DNA sequences of the charophycean green algae Staurastrum and Zygnema reveal that the chloroplast genome underwent extensive changes during the evolution of the Zygnematales.</title>
        <authorList>
            <person name="Turmel M."/>
            <person name="Otis C."/>
            <person name="Lemieux C."/>
        </authorList>
    </citation>
    <scope>NUCLEOTIDE SEQUENCE [LARGE SCALE GENOMIC DNA]</scope>
</reference>
<proteinExistence type="inferred from homology"/>
<name>CHLB_STAPU</name>
<feature type="chain" id="PRO_0000275261" description="Light-independent protochlorophyllide reductase subunit B">
    <location>
        <begin position="1"/>
        <end position="513"/>
    </location>
</feature>
<feature type="active site" description="Proton donor" evidence="1">
    <location>
        <position position="299"/>
    </location>
</feature>
<feature type="binding site" evidence="1">
    <location>
        <position position="36"/>
    </location>
    <ligand>
        <name>[4Fe-4S] cluster</name>
        <dbReference type="ChEBI" id="CHEBI:49883"/>
        <note>ligand shared with heterodimeric partner</note>
    </ligand>
</feature>
<feature type="binding site" evidence="1">
    <location>
        <begin position="434"/>
        <end position="435"/>
    </location>
    <ligand>
        <name>substrate</name>
    </ligand>
</feature>
<keyword id="KW-0004">4Fe-4S</keyword>
<keyword id="KW-0067">ATP-binding</keyword>
<keyword id="KW-0149">Chlorophyll biosynthesis</keyword>
<keyword id="KW-0150">Chloroplast</keyword>
<keyword id="KW-0408">Iron</keyword>
<keyword id="KW-0411">Iron-sulfur</keyword>
<keyword id="KW-0479">Metal-binding</keyword>
<keyword id="KW-0547">Nucleotide-binding</keyword>
<keyword id="KW-0560">Oxidoreductase</keyword>
<keyword id="KW-0602">Photosynthesis</keyword>
<keyword id="KW-0934">Plastid</keyword>
<evidence type="ECO:0000255" key="1">
    <source>
        <dbReference type="HAMAP-Rule" id="MF_00353"/>
    </source>
</evidence>
<accession>Q32RS2</accession>
<sequence length="513" mass="58048">MKIAYWMYAGPAHIGTLRVASSFKNVHAIMHAPLGDDYFNVMRSMLERERDFTPVTASIVDRHVLARGSQEKVVENITRKDKEERPDLIVLTPTCTSSILQEDLQNFVDRAAMTSQSDVILADVNHYRVNELQAADRTLEQVVRYYLDKAHRQENLNQPITEVPSVNIIGMFTLGFHNQHDCRELKRLFQDLGIKVNEVIPEGGSVENLRNLPKAWLNIVPYREVGLMTALYLEKEFGMPYVATTPMGIVDTAKFIREIQHHINKWAPILLGKVVDYEEYIDQQTRFVSQAAWFSRSIDCQNLTGKKAVVFGDTTHAAAMTKILAREMGVYVVCAGTYCKHDAEWFKDQVQGFCDEVLITDDHTEVGDMIARVEPAAIFGSQMERHIGKRLDIPCGVISAPVHIQNFPLGYRPFLGYEGTNQIADLVYNSFTLGMEDHLLEIFGGHDTKEVITKSLSTDSDLTWDPESQAELSKIPGFVRGKIKRNTEKFARQNGMSKITVEIMYAAKEALNA</sequence>
<comment type="function">
    <text evidence="1">Component of the dark-operative protochlorophyllide reductase (DPOR) that uses Mg-ATP and reduced ferredoxin to reduce ring D of protochlorophyllide (Pchlide) to form chlorophyllide a (Chlide). This reaction is light-independent. The NB-protein (ChlN-ChlB) is the catalytic component of the complex.</text>
</comment>
<comment type="catalytic activity">
    <reaction evidence="1">
        <text>chlorophyllide a + oxidized 2[4Fe-4S]-[ferredoxin] + 2 ADP + 2 phosphate = protochlorophyllide a + reduced 2[4Fe-4S]-[ferredoxin] + 2 ATP + 2 H2O</text>
        <dbReference type="Rhea" id="RHEA:28202"/>
        <dbReference type="Rhea" id="RHEA-COMP:10002"/>
        <dbReference type="Rhea" id="RHEA-COMP:10004"/>
        <dbReference type="ChEBI" id="CHEBI:15377"/>
        <dbReference type="ChEBI" id="CHEBI:30616"/>
        <dbReference type="ChEBI" id="CHEBI:33722"/>
        <dbReference type="ChEBI" id="CHEBI:33723"/>
        <dbReference type="ChEBI" id="CHEBI:43474"/>
        <dbReference type="ChEBI" id="CHEBI:83348"/>
        <dbReference type="ChEBI" id="CHEBI:83350"/>
        <dbReference type="ChEBI" id="CHEBI:456216"/>
        <dbReference type="EC" id="1.3.7.7"/>
    </reaction>
</comment>
<comment type="cofactor">
    <cofactor evidence="1">
        <name>[4Fe-4S] cluster</name>
        <dbReference type="ChEBI" id="CHEBI:49883"/>
    </cofactor>
    <text evidence="1">Binds 1 [4Fe-4S] cluster per heterodimer. The cluster is bound at the heterodimer interface by residues from both subunits.</text>
</comment>
<comment type="pathway">
    <text evidence="1">Porphyrin-containing compound metabolism; chlorophyll biosynthesis (light-independent).</text>
</comment>
<comment type="subunit">
    <text evidence="1">Protochlorophyllide reductase is composed of three subunits; ChlL, ChlN and ChlB. Forms a heterotetramer of two ChlB and two ChlN subunits.</text>
</comment>
<comment type="subcellular location">
    <subcellularLocation>
        <location>Plastid</location>
        <location>Chloroplast</location>
    </subcellularLocation>
</comment>
<comment type="similarity">
    <text evidence="1">Belongs to the ChlB/BchB/BchZ family.</text>
</comment>
<protein>
    <recommendedName>
        <fullName evidence="1">Light-independent protochlorophyllide reductase subunit B</fullName>
        <shortName evidence="1">DPOR subunit B</shortName>
        <shortName evidence="1">LI-POR subunit B</shortName>
        <ecNumber evidence="1">1.3.7.7</ecNumber>
    </recommendedName>
</protein>
<geneLocation type="chloroplast"/>
<organism>
    <name type="scientific">Staurastrum punctulatum</name>
    <name type="common">Green alga</name>
    <name type="synonym">Cosmoastrum punctulatum</name>
    <dbReference type="NCBI Taxonomy" id="102822"/>
    <lineage>
        <taxon>Eukaryota</taxon>
        <taxon>Viridiplantae</taxon>
        <taxon>Streptophyta</taxon>
        <taxon>Zygnematophyceae</taxon>
        <taxon>Zygnematophycidae</taxon>
        <taxon>Desmidiales</taxon>
        <taxon>Desmidiaceae</taxon>
        <taxon>Staurastrum</taxon>
    </lineage>
</organism>
<dbReference type="EC" id="1.3.7.7" evidence="1"/>
<dbReference type="EMBL" id="AY958085">
    <property type="protein sequence ID" value="AAX45690.1"/>
    <property type="molecule type" value="Genomic_DNA"/>
</dbReference>
<dbReference type="RefSeq" id="YP_636454.1">
    <property type="nucleotide sequence ID" value="NC_008116.1"/>
</dbReference>
<dbReference type="SMR" id="Q32RS2"/>
<dbReference type="GeneID" id="4108648"/>
<dbReference type="UniPathway" id="UPA00670"/>
<dbReference type="GO" id="GO:0009507">
    <property type="term" value="C:chloroplast"/>
    <property type="evidence" value="ECO:0007669"/>
    <property type="project" value="UniProtKB-SubCell"/>
</dbReference>
<dbReference type="GO" id="GO:0051539">
    <property type="term" value="F:4 iron, 4 sulfur cluster binding"/>
    <property type="evidence" value="ECO:0007669"/>
    <property type="project" value="UniProtKB-UniRule"/>
</dbReference>
<dbReference type="GO" id="GO:0005524">
    <property type="term" value="F:ATP binding"/>
    <property type="evidence" value="ECO:0007669"/>
    <property type="project" value="UniProtKB-UniRule"/>
</dbReference>
<dbReference type="GO" id="GO:0046872">
    <property type="term" value="F:metal ion binding"/>
    <property type="evidence" value="ECO:0007669"/>
    <property type="project" value="UniProtKB-KW"/>
</dbReference>
<dbReference type="GO" id="GO:0016730">
    <property type="term" value="F:oxidoreductase activity, acting on iron-sulfur proteins as donors"/>
    <property type="evidence" value="ECO:0007669"/>
    <property type="project" value="InterPro"/>
</dbReference>
<dbReference type="GO" id="GO:0016636">
    <property type="term" value="F:oxidoreductase activity, acting on the CH-CH group of donors, iron-sulfur protein as acceptor"/>
    <property type="evidence" value="ECO:0007669"/>
    <property type="project" value="UniProtKB-UniRule"/>
</dbReference>
<dbReference type="GO" id="GO:0036068">
    <property type="term" value="P:light-independent chlorophyll biosynthetic process"/>
    <property type="evidence" value="ECO:0007669"/>
    <property type="project" value="UniProtKB-UniRule"/>
</dbReference>
<dbReference type="GO" id="GO:0019685">
    <property type="term" value="P:photosynthesis, dark reaction"/>
    <property type="evidence" value="ECO:0007669"/>
    <property type="project" value="InterPro"/>
</dbReference>
<dbReference type="CDD" id="cd01981">
    <property type="entry name" value="Pchlide_reductase_B"/>
    <property type="match status" value="1"/>
</dbReference>
<dbReference type="Gene3D" id="1.20.89.20">
    <property type="match status" value="1"/>
</dbReference>
<dbReference type="Gene3D" id="3.40.50.1980">
    <property type="entry name" value="Nitrogenase molybdenum iron protein domain"/>
    <property type="match status" value="3"/>
</dbReference>
<dbReference type="Gene3D" id="1.10.8.550">
    <property type="entry name" value="Proto-chlorophyllide reductase 57 kD subunit B"/>
    <property type="match status" value="1"/>
</dbReference>
<dbReference type="HAMAP" id="MF_00353">
    <property type="entry name" value="ChlB_BchB"/>
    <property type="match status" value="1"/>
</dbReference>
<dbReference type="InterPro" id="IPR050152">
    <property type="entry name" value="ChlB/BchB/BchZ"/>
</dbReference>
<dbReference type="InterPro" id="IPR013580">
    <property type="entry name" value="LI-POR_suB-like_C"/>
</dbReference>
<dbReference type="InterPro" id="IPR000510">
    <property type="entry name" value="Nase/OxRdtase_comp1"/>
</dbReference>
<dbReference type="InterPro" id="IPR042298">
    <property type="entry name" value="P-CP_red_C"/>
</dbReference>
<dbReference type="InterPro" id="IPR005969">
    <property type="entry name" value="Protochl_reductB"/>
</dbReference>
<dbReference type="InterPro" id="IPR016209">
    <property type="entry name" value="Protochlorophyllide_Rdtase"/>
</dbReference>
<dbReference type="NCBIfam" id="TIGR01278">
    <property type="entry name" value="DPOR_BchB"/>
    <property type="match status" value="1"/>
</dbReference>
<dbReference type="PANTHER" id="PTHR33712">
    <property type="entry name" value="LIGHT-INDEPENDENT PROTOCHLOROPHYLLIDE REDUCTASE SUBUNIT B"/>
    <property type="match status" value="1"/>
</dbReference>
<dbReference type="PANTHER" id="PTHR33712:SF7">
    <property type="entry name" value="LIGHT-INDEPENDENT PROTOCHLOROPHYLLIDE REDUCTASE SUBUNIT B"/>
    <property type="match status" value="1"/>
</dbReference>
<dbReference type="Pfam" id="PF00148">
    <property type="entry name" value="Oxidored_nitro"/>
    <property type="match status" value="1"/>
</dbReference>
<dbReference type="Pfam" id="PF08369">
    <property type="entry name" value="PCP_red"/>
    <property type="match status" value="1"/>
</dbReference>
<dbReference type="PIRSF" id="PIRSF000163">
    <property type="entry name" value="PCP_ChlB"/>
    <property type="match status" value="1"/>
</dbReference>
<dbReference type="SUPFAM" id="SSF53807">
    <property type="entry name" value="Helical backbone' metal receptor"/>
    <property type="match status" value="1"/>
</dbReference>